<dbReference type="EC" id="2.5.1.75" evidence="1"/>
<dbReference type="EMBL" id="CP000792">
    <property type="protein sequence ID" value="EAT98526.1"/>
    <property type="molecule type" value="Genomic_DNA"/>
</dbReference>
<dbReference type="RefSeq" id="WP_012001069.1">
    <property type="nucleotide sequence ID" value="NC_009802.2"/>
</dbReference>
<dbReference type="SMR" id="A7ZB92"/>
<dbReference type="STRING" id="360104.CCC13826_1161"/>
<dbReference type="KEGG" id="cco:CCC13826_1161"/>
<dbReference type="eggNOG" id="COG0324">
    <property type="taxonomic scope" value="Bacteria"/>
</dbReference>
<dbReference type="HOGENOM" id="CLU_032616_0_1_7"/>
<dbReference type="OrthoDB" id="9776390at2"/>
<dbReference type="Proteomes" id="UP000001121">
    <property type="component" value="Chromosome"/>
</dbReference>
<dbReference type="GO" id="GO:0005524">
    <property type="term" value="F:ATP binding"/>
    <property type="evidence" value="ECO:0007669"/>
    <property type="project" value="UniProtKB-UniRule"/>
</dbReference>
<dbReference type="GO" id="GO:0052381">
    <property type="term" value="F:tRNA dimethylallyltransferase activity"/>
    <property type="evidence" value="ECO:0007669"/>
    <property type="project" value="UniProtKB-UniRule"/>
</dbReference>
<dbReference type="GO" id="GO:0006400">
    <property type="term" value="P:tRNA modification"/>
    <property type="evidence" value="ECO:0007669"/>
    <property type="project" value="TreeGrafter"/>
</dbReference>
<dbReference type="Gene3D" id="1.10.287.890">
    <property type="entry name" value="Crystal structure of tRNA isopentenylpyrophosphate transferase (bh2366) domain"/>
    <property type="match status" value="1"/>
</dbReference>
<dbReference type="Gene3D" id="3.40.50.300">
    <property type="entry name" value="P-loop containing nucleotide triphosphate hydrolases"/>
    <property type="match status" value="1"/>
</dbReference>
<dbReference type="HAMAP" id="MF_00185">
    <property type="entry name" value="IPP_trans"/>
    <property type="match status" value="1"/>
</dbReference>
<dbReference type="InterPro" id="IPR039657">
    <property type="entry name" value="Dimethylallyltransferase"/>
</dbReference>
<dbReference type="InterPro" id="IPR018022">
    <property type="entry name" value="IPT"/>
</dbReference>
<dbReference type="InterPro" id="IPR027417">
    <property type="entry name" value="P-loop_NTPase"/>
</dbReference>
<dbReference type="NCBIfam" id="TIGR00174">
    <property type="entry name" value="miaA"/>
    <property type="match status" value="1"/>
</dbReference>
<dbReference type="PANTHER" id="PTHR11088">
    <property type="entry name" value="TRNA DIMETHYLALLYLTRANSFERASE"/>
    <property type="match status" value="1"/>
</dbReference>
<dbReference type="PANTHER" id="PTHR11088:SF60">
    <property type="entry name" value="TRNA DIMETHYLALLYLTRANSFERASE"/>
    <property type="match status" value="1"/>
</dbReference>
<dbReference type="Pfam" id="PF01715">
    <property type="entry name" value="IPPT"/>
    <property type="match status" value="1"/>
</dbReference>
<dbReference type="SUPFAM" id="SSF52540">
    <property type="entry name" value="P-loop containing nucleoside triphosphate hydrolases"/>
    <property type="match status" value="2"/>
</dbReference>
<name>MIAA_CAMC1</name>
<feature type="chain" id="PRO_0000377101" description="tRNA dimethylallyltransferase">
    <location>
        <begin position="1"/>
        <end position="291"/>
    </location>
</feature>
<feature type="region of interest" description="Interaction with substrate tRNA" evidence="1">
    <location>
        <begin position="34"/>
        <end position="37"/>
    </location>
</feature>
<feature type="binding site" evidence="1">
    <location>
        <begin position="9"/>
        <end position="16"/>
    </location>
    <ligand>
        <name>ATP</name>
        <dbReference type="ChEBI" id="CHEBI:30616"/>
    </ligand>
</feature>
<feature type="binding site" evidence="1">
    <location>
        <begin position="11"/>
        <end position="16"/>
    </location>
    <ligand>
        <name>substrate</name>
    </ligand>
</feature>
<feature type="site" description="Interaction with substrate tRNA" evidence="1">
    <location>
        <position position="100"/>
    </location>
</feature>
<protein>
    <recommendedName>
        <fullName evidence="1">tRNA dimethylallyltransferase</fullName>
        <ecNumber evidence="1">2.5.1.75</ecNumber>
    </recommendedName>
    <alternativeName>
        <fullName evidence="1">Dimethylallyl diphosphate:tRNA dimethylallyltransferase</fullName>
        <shortName evidence="1">DMAPP:tRNA dimethylallyltransferase</shortName>
        <shortName evidence="1">DMATase</shortName>
    </alternativeName>
    <alternativeName>
        <fullName evidence="1">Isopentenyl-diphosphate:tRNA isopentenyltransferase</fullName>
        <shortName evidence="1">IPP transferase</shortName>
        <shortName evidence="1">IPPT</shortName>
        <shortName evidence="1">IPTase</shortName>
    </alternativeName>
</protein>
<organism>
    <name type="scientific">Campylobacter concisus (strain 13826)</name>
    <dbReference type="NCBI Taxonomy" id="360104"/>
    <lineage>
        <taxon>Bacteria</taxon>
        <taxon>Pseudomonadati</taxon>
        <taxon>Campylobacterota</taxon>
        <taxon>Epsilonproteobacteria</taxon>
        <taxon>Campylobacterales</taxon>
        <taxon>Campylobacteraceae</taxon>
        <taxon>Campylobacter</taxon>
    </lineage>
</organism>
<sequence>MFKELALIGTTASGKSDLAFELAKEFEGVILSLDSLALYKEIDIASAKPKSWQLEAVRHFGVDEIYPDEEFSVGAFFEIYKNAKEIARLRGCPLIITGGSGFYLKAMLSGLAPDVPKCELNLSNEEIYELALQNDPEFAGKFSQNDSYRLEKWYQIYKFSGQIPSIWLRENTKPSVIKELAIFEILWDKDELRARIAKRTKNMLDEGLIDEAKFLFEKYKSEPKPLKSIGLKECKQFLEGEISKNELETLIATHTAQLAKRQRTFNRSQFEKKFVGDLAQTRSEILKFLKG</sequence>
<accession>A7ZB92</accession>
<proteinExistence type="inferred from homology"/>
<keyword id="KW-0067">ATP-binding</keyword>
<keyword id="KW-0460">Magnesium</keyword>
<keyword id="KW-0547">Nucleotide-binding</keyword>
<keyword id="KW-0808">Transferase</keyword>
<keyword id="KW-0819">tRNA processing</keyword>
<evidence type="ECO:0000255" key="1">
    <source>
        <dbReference type="HAMAP-Rule" id="MF_00185"/>
    </source>
</evidence>
<gene>
    <name evidence="1" type="primary">miaA</name>
    <name type="ordered locus">Ccon26_01320</name>
    <name type="ORF">CCC13826_1161</name>
</gene>
<comment type="function">
    <text evidence="1">Catalyzes the transfer of a dimethylallyl group onto the adenine at position 37 in tRNAs that read codons beginning with uridine, leading to the formation of N6-(dimethylallyl)adenosine (i(6)A).</text>
</comment>
<comment type="catalytic activity">
    <reaction evidence="1">
        <text>adenosine(37) in tRNA + dimethylallyl diphosphate = N(6)-dimethylallyladenosine(37) in tRNA + diphosphate</text>
        <dbReference type="Rhea" id="RHEA:26482"/>
        <dbReference type="Rhea" id="RHEA-COMP:10162"/>
        <dbReference type="Rhea" id="RHEA-COMP:10375"/>
        <dbReference type="ChEBI" id="CHEBI:33019"/>
        <dbReference type="ChEBI" id="CHEBI:57623"/>
        <dbReference type="ChEBI" id="CHEBI:74411"/>
        <dbReference type="ChEBI" id="CHEBI:74415"/>
        <dbReference type="EC" id="2.5.1.75"/>
    </reaction>
</comment>
<comment type="cofactor">
    <cofactor evidence="1">
        <name>Mg(2+)</name>
        <dbReference type="ChEBI" id="CHEBI:18420"/>
    </cofactor>
</comment>
<comment type="subunit">
    <text evidence="1">Monomer.</text>
</comment>
<comment type="similarity">
    <text evidence="1">Belongs to the IPP transferase family.</text>
</comment>
<reference key="1">
    <citation type="submission" date="2007-10" db="EMBL/GenBank/DDBJ databases">
        <title>Genome sequence of Campylobacter concisus 13826 isolated from human feces.</title>
        <authorList>
            <person name="Fouts D.E."/>
            <person name="Mongodin E.F."/>
            <person name="Puiu D."/>
            <person name="Sebastian Y."/>
            <person name="Miller W.G."/>
            <person name="Mandrell R.E."/>
            <person name="On S."/>
            <person name="Nelson K.E."/>
        </authorList>
    </citation>
    <scope>NUCLEOTIDE SEQUENCE [LARGE SCALE GENOMIC DNA]</scope>
    <source>
        <strain>13826</strain>
    </source>
</reference>